<evidence type="ECO:0000255" key="1">
    <source>
        <dbReference type="HAMAP-Rule" id="MF_00121"/>
    </source>
</evidence>
<feature type="chain" id="PRO_1000122519" description="Aspartyl/glutamyl-tRNA(Asn/Gln) amidotransferase subunit B">
    <location>
        <begin position="1"/>
        <end position="479"/>
    </location>
</feature>
<accession>B9LZ19</accession>
<sequence length="479" mass="53104">MEYRAVIGLEVHVQLNTNTKIFCGCSTKFGAEPNSQTCPVCLGMPGALPVLNRKVVEYAIKAGLATNCEIAPRSIFARKNYFYPDLPKGYQISQYELPICSAGHLDIQVEGTAKRIGITRIHMEEDAGKLVHADVPGVGDDSCVDLNRACTPLLEIVSEPDLRSADEAVAYLKKLHQIVVYLGISDGNMEEGSFRCDANVSVMRVGADKFGTRTETKNVNSFKFVKQAIEYEIERQIEVIEDGGKIVQETRLFDPNTGVTRSMRGKEEAHDYRYFPDPDLVPLVISNDWVEDVRLGLPELPEAKRLRYMDELGLPAYDAEVLTASRELADYFEACLEFHSQPKPVANWVMGEVTRALNEENRSITDAPVTPQLLAELLQLIDKGTISGKIAKTVFDEMWRTGKAPAKVVEEKGLVQVSDTGEIEKIIDEVLAREAGQVAEYRSGKDKLFGFFVGQVMRASKGKANPAVVNELLLKKLQG</sequence>
<proteinExistence type="inferred from homology"/>
<protein>
    <recommendedName>
        <fullName evidence="1">Aspartyl/glutamyl-tRNA(Asn/Gln) amidotransferase subunit B</fullName>
        <shortName evidence="1">Asp/Glu-ADT subunit B</shortName>
        <ecNumber evidence="1">6.3.5.-</ecNumber>
    </recommendedName>
</protein>
<dbReference type="EC" id="6.3.5.-" evidence="1"/>
<dbReference type="EMBL" id="CP001390">
    <property type="protein sequence ID" value="ACM18751.1"/>
    <property type="molecule type" value="Genomic_DNA"/>
</dbReference>
<dbReference type="RefSeq" id="WP_012645480.1">
    <property type="nucleotide sequence ID" value="NC_011979.1"/>
</dbReference>
<dbReference type="SMR" id="B9LZ19"/>
<dbReference type="STRING" id="316067.Geob_0382"/>
<dbReference type="KEGG" id="geo:Geob_0382"/>
<dbReference type="eggNOG" id="COG0064">
    <property type="taxonomic scope" value="Bacteria"/>
</dbReference>
<dbReference type="HOGENOM" id="CLU_019240_0_0_7"/>
<dbReference type="OrthoDB" id="9804078at2"/>
<dbReference type="Proteomes" id="UP000007721">
    <property type="component" value="Chromosome"/>
</dbReference>
<dbReference type="GO" id="GO:0050566">
    <property type="term" value="F:asparaginyl-tRNA synthase (glutamine-hydrolyzing) activity"/>
    <property type="evidence" value="ECO:0007669"/>
    <property type="project" value="RHEA"/>
</dbReference>
<dbReference type="GO" id="GO:0005524">
    <property type="term" value="F:ATP binding"/>
    <property type="evidence" value="ECO:0007669"/>
    <property type="project" value="UniProtKB-KW"/>
</dbReference>
<dbReference type="GO" id="GO:0050567">
    <property type="term" value="F:glutaminyl-tRNA synthase (glutamine-hydrolyzing) activity"/>
    <property type="evidence" value="ECO:0007669"/>
    <property type="project" value="UniProtKB-UniRule"/>
</dbReference>
<dbReference type="GO" id="GO:0070681">
    <property type="term" value="P:glutaminyl-tRNAGln biosynthesis via transamidation"/>
    <property type="evidence" value="ECO:0007669"/>
    <property type="project" value="TreeGrafter"/>
</dbReference>
<dbReference type="GO" id="GO:0006412">
    <property type="term" value="P:translation"/>
    <property type="evidence" value="ECO:0007669"/>
    <property type="project" value="UniProtKB-UniRule"/>
</dbReference>
<dbReference type="FunFam" id="1.10.10.410:FF:000001">
    <property type="entry name" value="Aspartyl/glutamyl-tRNA(Asn/Gln) amidotransferase subunit B"/>
    <property type="match status" value="1"/>
</dbReference>
<dbReference type="FunFam" id="1.10.150.380:FF:000001">
    <property type="entry name" value="Aspartyl/glutamyl-tRNA(Asn/Gln) amidotransferase subunit B"/>
    <property type="match status" value="1"/>
</dbReference>
<dbReference type="Gene3D" id="1.10.10.410">
    <property type="match status" value="1"/>
</dbReference>
<dbReference type="Gene3D" id="1.10.150.380">
    <property type="entry name" value="GatB domain, N-terminal subdomain"/>
    <property type="match status" value="1"/>
</dbReference>
<dbReference type="HAMAP" id="MF_00121">
    <property type="entry name" value="GatB"/>
    <property type="match status" value="1"/>
</dbReference>
<dbReference type="InterPro" id="IPR017959">
    <property type="entry name" value="Asn/Gln-tRNA_amidoTrfase_suB/E"/>
</dbReference>
<dbReference type="InterPro" id="IPR006075">
    <property type="entry name" value="Asn/Gln-tRNA_Trfase_suB/E_cat"/>
</dbReference>
<dbReference type="InterPro" id="IPR018027">
    <property type="entry name" value="Asn/Gln_amidotransferase"/>
</dbReference>
<dbReference type="InterPro" id="IPR003789">
    <property type="entry name" value="Asn/Gln_tRNA_amidoTrase-B-like"/>
</dbReference>
<dbReference type="InterPro" id="IPR004413">
    <property type="entry name" value="GatB"/>
</dbReference>
<dbReference type="InterPro" id="IPR042114">
    <property type="entry name" value="GatB_C_1"/>
</dbReference>
<dbReference type="InterPro" id="IPR023168">
    <property type="entry name" value="GatB_Yqey_C_2"/>
</dbReference>
<dbReference type="InterPro" id="IPR017958">
    <property type="entry name" value="Gln-tRNA_amidoTrfase_suB_CS"/>
</dbReference>
<dbReference type="InterPro" id="IPR014746">
    <property type="entry name" value="Gln_synth/guanido_kin_cat_dom"/>
</dbReference>
<dbReference type="NCBIfam" id="TIGR00133">
    <property type="entry name" value="gatB"/>
    <property type="match status" value="1"/>
</dbReference>
<dbReference type="NCBIfam" id="NF004012">
    <property type="entry name" value="PRK05477.1-2"/>
    <property type="match status" value="1"/>
</dbReference>
<dbReference type="NCBIfam" id="NF004014">
    <property type="entry name" value="PRK05477.1-4"/>
    <property type="match status" value="1"/>
</dbReference>
<dbReference type="NCBIfam" id="NF004015">
    <property type="entry name" value="PRK05477.1-5"/>
    <property type="match status" value="1"/>
</dbReference>
<dbReference type="PANTHER" id="PTHR11659">
    <property type="entry name" value="GLUTAMYL-TRNA GLN AMIDOTRANSFERASE SUBUNIT B MITOCHONDRIAL AND PROKARYOTIC PET112-RELATED"/>
    <property type="match status" value="1"/>
</dbReference>
<dbReference type="PANTHER" id="PTHR11659:SF0">
    <property type="entry name" value="GLUTAMYL-TRNA(GLN) AMIDOTRANSFERASE SUBUNIT B, MITOCHONDRIAL"/>
    <property type="match status" value="1"/>
</dbReference>
<dbReference type="Pfam" id="PF02934">
    <property type="entry name" value="GatB_N"/>
    <property type="match status" value="1"/>
</dbReference>
<dbReference type="Pfam" id="PF02637">
    <property type="entry name" value="GatB_Yqey"/>
    <property type="match status" value="1"/>
</dbReference>
<dbReference type="SMART" id="SM00845">
    <property type="entry name" value="GatB_Yqey"/>
    <property type="match status" value="1"/>
</dbReference>
<dbReference type="SUPFAM" id="SSF89095">
    <property type="entry name" value="GatB/YqeY motif"/>
    <property type="match status" value="1"/>
</dbReference>
<dbReference type="SUPFAM" id="SSF55931">
    <property type="entry name" value="Glutamine synthetase/guanido kinase"/>
    <property type="match status" value="1"/>
</dbReference>
<dbReference type="PROSITE" id="PS01234">
    <property type="entry name" value="GATB"/>
    <property type="match status" value="1"/>
</dbReference>
<name>GATB_GEODF</name>
<gene>
    <name evidence="1" type="primary">gatB</name>
    <name type="ordered locus">Geob_0382</name>
</gene>
<comment type="function">
    <text evidence="1">Allows the formation of correctly charged Asn-tRNA(Asn) or Gln-tRNA(Gln) through the transamidation of misacylated Asp-tRNA(Asn) or Glu-tRNA(Gln) in organisms which lack either or both of asparaginyl-tRNA or glutaminyl-tRNA synthetases. The reaction takes place in the presence of glutamine and ATP through an activated phospho-Asp-tRNA(Asn) or phospho-Glu-tRNA(Gln).</text>
</comment>
<comment type="catalytic activity">
    <reaction evidence="1">
        <text>L-glutamyl-tRNA(Gln) + L-glutamine + ATP + H2O = L-glutaminyl-tRNA(Gln) + L-glutamate + ADP + phosphate + H(+)</text>
        <dbReference type="Rhea" id="RHEA:17521"/>
        <dbReference type="Rhea" id="RHEA-COMP:9681"/>
        <dbReference type="Rhea" id="RHEA-COMP:9684"/>
        <dbReference type="ChEBI" id="CHEBI:15377"/>
        <dbReference type="ChEBI" id="CHEBI:15378"/>
        <dbReference type="ChEBI" id="CHEBI:29985"/>
        <dbReference type="ChEBI" id="CHEBI:30616"/>
        <dbReference type="ChEBI" id="CHEBI:43474"/>
        <dbReference type="ChEBI" id="CHEBI:58359"/>
        <dbReference type="ChEBI" id="CHEBI:78520"/>
        <dbReference type="ChEBI" id="CHEBI:78521"/>
        <dbReference type="ChEBI" id="CHEBI:456216"/>
    </reaction>
</comment>
<comment type="catalytic activity">
    <reaction evidence="1">
        <text>L-aspartyl-tRNA(Asn) + L-glutamine + ATP + H2O = L-asparaginyl-tRNA(Asn) + L-glutamate + ADP + phosphate + 2 H(+)</text>
        <dbReference type="Rhea" id="RHEA:14513"/>
        <dbReference type="Rhea" id="RHEA-COMP:9674"/>
        <dbReference type="Rhea" id="RHEA-COMP:9677"/>
        <dbReference type="ChEBI" id="CHEBI:15377"/>
        <dbReference type="ChEBI" id="CHEBI:15378"/>
        <dbReference type="ChEBI" id="CHEBI:29985"/>
        <dbReference type="ChEBI" id="CHEBI:30616"/>
        <dbReference type="ChEBI" id="CHEBI:43474"/>
        <dbReference type="ChEBI" id="CHEBI:58359"/>
        <dbReference type="ChEBI" id="CHEBI:78515"/>
        <dbReference type="ChEBI" id="CHEBI:78516"/>
        <dbReference type="ChEBI" id="CHEBI:456216"/>
    </reaction>
</comment>
<comment type="subunit">
    <text evidence="1">Heterotrimer of A, B and C subunits.</text>
</comment>
<comment type="similarity">
    <text evidence="1">Belongs to the GatB/GatE family. GatB subfamily.</text>
</comment>
<keyword id="KW-0067">ATP-binding</keyword>
<keyword id="KW-0436">Ligase</keyword>
<keyword id="KW-0547">Nucleotide-binding</keyword>
<keyword id="KW-0648">Protein biosynthesis</keyword>
<keyword id="KW-1185">Reference proteome</keyword>
<organism>
    <name type="scientific">Geotalea daltonii (strain DSM 22248 / JCM 15807 / FRC-32)</name>
    <name type="common">Geobacter daltonii</name>
    <dbReference type="NCBI Taxonomy" id="316067"/>
    <lineage>
        <taxon>Bacteria</taxon>
        <taxon>Pseudomonadati</taxon>
        <taxon>Thermodesulfobacteriota</taxon>
        <taxon>Desulfuromonadia</taxon>
        <taxon>Geobacterales</taxon>
        <taxon>Geobacteraceae</taxon>
        <taxon>Geotalea</taxon>
    </lineage>
</organism>
<reference key="1">
    <citation type="submission" date="2009-01" db="EMBL/GenBank/DDBJ databases">
        <title>Complete sequence of Geobacter sp. FRC-32.</title>
        <authorList>
            <consortium name="US DOE Joint Genome Institute"/>
            <person name="Lucas S."/>
            <person name="Copeland A."/>
            <person name="Lapidus A."/>
            <person name="Glavina del Rio T."/>
            <person name="Dalin E."/>
            <person name="Tice H."/>
            <person name="Bruce D."/>
            <person name="Goodwin L."/>
            <person name="Pitluck S."/>
            <person name="Saunders E."/>
            <person name="Brettin T."/>
            <person name="Detter J.C."/>
            <person name="Han C."/>
            <person name="Larimer F."/>
            <person name="Land M."/>
            <person name="Hauser L."/>
            <person name="Kyrpides N."/>
            <person name="Ovchinnikova G."/>
            <person name="Kostka J."/>
            <person name="Richardson P."/>
        </authorList>
    </citation>
    <scope>NUCLEOTIDE SEQUENCE [LARGE SCALE GENOMIC DNA]</scope>
    <source>
        <strain>DSM 22248 / JCM 15807 / FRC-32</strain>
    </source>
</reference>